<reference key="1">
    <citation type="journal article" date="2000" name="Nature">
        <title>Sequence and analysis of chromosome 1 of the plant Arabidopsis thaliana.</title>
        <authorList>
            <person name="Theologis A."/>
            <person name="Ecker J.R."/>
            <person name="Palm C.J."/>
            <person name="Federspiel N.A."/>
            <person name="Kaul S."/>
            <person name="White O."/>
            <person name="Alonso J."/>
            <person name="Altafi H."/>
            <person name="Araujo R."/>
            <person name="Bowman C.L."/>
            <person name="Brooks S.Y."/>
            <person name="Buehler E."/>
            <person name="Chan A."/>
            <person name="Chao Q."/>
            <person name="Chen H."/>
            <person name="Cheuk R.F."/>
            <person name="Chin C.W."/>
            <person name="Chung M.K."/>
            <person name="Conn L."/>
            <person name="Conway A.B."/>
            <person name="Conway A.R."/>
            <person name="Creasy T.H."/>
            <person name="Dewar K."/>
            <person name="Dunn P."/>
            <person name="Etgu P."/>
            <person name="Feldblyum T.V."/>
            <person name="Feng J.-D."/>
            <person name="Fong B."/>
            <person name="Fujii C.Y."/>
            <person name="Gill J.E."/>
            <person name="Goldsmith A.D."/>
            <person name="Haas B."/>
            <person name="Hansen N.F."/>
            <person name="Hughes B."/>
            <person name="Huizar L."/>
            <person name="Hunter J.L."/>
            <person name="Jenkins J."/>
            <person name="Johnson-Hopson C."/>
            <person name="Khan S."/>
            <person name="Khaykin E."/>
            <person name="Kim C.J."/>
            <person name="Koo H.L."/>
            <person name="Kremenetskaia I."/>
            <person name="Kurtz D.B."/>
            <person name="Kwan A."/>
            <person name="Lam B."/>
            <person name="Langin-Hooper S."/>
            <person name="Lee A."/>
            <person name="Lee J.M."/>
            <person name="Lenz C.A."/>
            <person name="Li J.H."/>
            <person name="Li Y.-P."/>
            <person name="Lin X."/>
            <person name="Liu S.X."/>
            <person name="Liu Z.A."/>
            <person name="Luros J.S."/>
            <person name="Maiti R."/>
            <person name="Marziali A."/>
            <person name="Militscher J."/>
            <person name="Miranda M."/>
            <person name="Nguyen M."/>
            <person name="Nierman W.C."/>
            <person name="Osborne B.I."/>
            <person name="Pai G."/>
            <person name="Peterson J."/>
            <person name="Pham P.K."/>
            <person name="Rizzo M."/>
            <person name="Rooney T."/>
            <person name="Rowley D."/>
            <person name="Sakano H."/>
            <person name="Salzberg S.L."/>
            <person name="Schwartz J.R."/>
            <person name="Shinn P."/>
            <person name="Southwick A.M."/>
            <person name="Sun H."/>
            <person name="Tallon L.J."/>
            <person name="Tambunga G."/>
            <person name="Toriumi M.J."/>
            <person name="Town C.D."/>
            <person name="Utterback T."/>
            <person name="Van Aken S."/>
            <person name="Vaysberg M."/>
            <person name="Vysotskaia V.S."/>
            <person name="Walker M."/>
            <person name="Wu D."/>
            <person name="Yu G."/>
            <person name="Fraser C.M."/>
            <person name="Venter J.C."/>
            <person name="Davis R.W."/>
        </authorList>
    </citation>
    <scope>NUCLEOTIDE SEQUENCE [LARGE SCALE GENOMIC DNA]</scope>
    <source>
        <strain>cv. Columbia</strain>
    </source>
</reference>
<reference key="2">
    <citation type="journal article" date="2017" name="Plant J.">
        <title>Araport11: a complete reannotation of the Arabidopsis thaliana reference genome.</title>
        <authorList>
            <person name="Cheng C.Y."/>
            <person name="Krishnakumar V."/>
            <person name="Chan A.P."/>
            <person name="Thibaud-Nissen F."/>
            <person name="Schobel S."/>
            <person name="Town C.D."/>
        </authorList>
    </citation>
    <scope>GENOME REANNOTATION</scope>
    <source>
        <strain>cv. Columbia</strain>
    </source>
</reference>
<reference key="3">
    <citation type="journal article" date="2003" name="Science">
        <title>Empirical analysis of transcriptional activity in the Arabidopsis genome.</title>
        <authorList>
            <person name="Yamada K."/>
            <person name="Lim J."/>
            <person name="Dale J.M."/>
            <person name="Chen H."/>
            <person name="Shinn P."/>
            <person name="Palm C.J."/>
            <person name="Southwick A.M."/>
            <person name="Wu H.C."/>
            <person name="Kim C.J."/>
            <person name="Nguyen M."/>
            <person name="Pham P.K."/>
            <person name="Cheuk R.F."/>
            <person name="Karlin-Newmann G."/>
            <person name="Liu S.X."/>
            <person name="Lam B."/>
            <person name="Sakano H."/>
            <person name="Wu T."/>
            <person name="Yu G."/>
            <person name="Miranda M."/>
            <person name="Quach H.L."/>
            <person name="Tripp M."/>
            <person name="Chang C.H."/>
            <person name="Lee J.M."/>
            <person name="Toriumi M.J."/>
            <person name="Chan M.M."/>
            <person name="Tang C.C."/>
            <person name="Onodera C.S."/>
            <person name="Deng J.M."/>
            <person name="Akiyama K."/>
            <person name="Ansari Y."/>
            <person name="Arakawa T."/>
            <person name="Banh J."/>
            <person name="Banno F."/>
            <person name="Bowser L."/>
            <person name="Brooks S.Y."/>
            <person name="Carninci P."/>
            <person name="Chao Q."/>
            <person name="Choy N."/>
            <person name="Enju A."/>
            <person name="Goldsmith A.D."/>
            <person name="Gurjal M."/>
            <person name="Hansen N.F."/>
            <person name="Hayashizaki Y."/>
            <person name="Johnson-Hopson C."/>
            <person name="Hsuan V.W."/>
            <person name="Iida K."/>
            <person name="Karnes M."/>
            <person name="Khan S."/>
            <person name="Koesema E."/>
            <person name="Ishida J."/>
            <person name="Jiang P.X."/>
            <person name="Jones T."/>
            <person name="Kawai J."/>
            <person name="Kamiya A."/>
            <person name="Meyers C."/>
            <person name="Nakajima M."/>
            <person name="Narusaka M."/>
            <person name="Seki M."/>
            <person name="Sakurai T."/>
            <person name="Satou M."/>
            <person name="Tamse R."/>
            <person name="Vaysberg M."/>
            <person name="Wallender E.K."/>
            <person name="Wong C."/>
            <person name="Yamamura Y."/>
            <person name="Yuan S."/>
            <person name="Shinozaki K."/>
            <person name="Davis R.W."/>
            <person name="Theologis A."/>
            <person name="Ecker J.R."/>
        </authorList>
    </citation>
    <scope>NUCLEOTIDE SEQUENCE [LARGE SCALE MRNA]</scope>
    <source>
        <strain>cv. Columbia</strain>
    </source>
</reference>
<feature type="chain" id="PRO_0000195029" description="Nucleolar GTP-binding protein 1">
    <location>
        <begin position="1"/>
        <end position="671"/>
    </location>
</feature>
<feature type="domain" description="OBG-type G" evidence="2">
    <location>
        <begin position="169"/>
        <end position="350"/>
    </location>
</feature>
<feature type="region of interest" description="Disordered" evidence="3">
    <location>
        <begin position="516"/>
        <end position="671"/>
    </location>
</feature>
<feature type="compositionally biased region" description="Polar residues" evidence="3">
    <location>
        <begin position="595"/>
        <end position="605"/>
    </location>
</feature>
<feature type="compositionally biased region" description="Basic residues" evidence="3">
    <location>
        <begin position="631"/>
        <end position="640"/>
    </location>
</feature>
<feature type="compositionally biased region" description="Basic residues" evidence="3">
    <location>
        <begin position="654"/>
        <end position="671"/>
    </location>
</feature>
<feature type="binding site" evidence="2">
    <location>
        <begin position="175"/>
        <end position="182"/>
    </location>
    <ligand>
        <name>GTP</name>
        <dbReference type="ChEBI" id="CHEBI:37565"/>
    </ligand>
</feature>
<feature type="binding site" evidence="2">
    <location>
        <begin position="221"/>
        <end position="225"/>
    </location>
    <ligand>
        <name>GTP</name>
        <dbReference type="ChEBI" id="CHEBI:37565"/>
    </ligand>
</feature>
<feature type="binding site" evidence="2">
    <location>
        <begin position="289"/>
        <end position="292"/>
    </location>
    <ligand>
        <name>GTP</name>
        <dbReference type="ChEBI" id="CHEBI:37565"/>
    </ligand>
</feature>
<feature type="sequence conflict" description="In Ref. 3; AY096652." evidence="4" ref="3">
    <original>R</original>
    <variation>S</variation>
    <location>
        <position position="461"/>
    </location>
</feature>
<keyword id="KW-0342">GTP-binding</keyword>
<keyword id="KW-0547">Nucleotide-binding</keyword>
<keyword id="KW-0539">Nucleus</keyword>
<keyword id="KW-1185">Reference proteome</keyword>
<keyword id="KW-0690">Ribosome biogenesis</keyword>
<protein>
    <recommendedName>
        <fullName>Nucleolar GTP-binding protein 1</fullName>
    </recommendedName>
</protein>
<accession>Q9C6I8</accession>
<sequence length="671" mass="76849">MVQYNFKRITVVPNGKEFVDIILSRTQRQTPTVVHKGYKINRLRQFYMRKVKYTQTNFHAKLSAIIDEFPRLEQIHPFYGDLLHVLYNKDHYKLALGQVNTARNLISKISKDYVKLLKYGDSLYRCKCLKVAALGRMCTVLKRITPSLAYLEQIRQHMARLPSIDPNTRTVLICGYPNVGKSSFMNKVTRADVDVQPYAFTTKSLFVGHTDYKYLRYQVIDTPGILDRPFEDRNIIEMCSITALAHLRAAVLFFLDISGSCGYTIAQQAALFHSIKSLFMNKPLVIVCNKTDLMPMENISEEDRKLIEEMKSEAMKTAMGASEEQVLLKMSTLTDEGVMSVKNAACERLLDQRVEAKMKSKKINDHLNRFHVAIPKPRDSIERLPCIPQVVLEAKAKEAAAMEKRKTEKDLEEENGGAGVYSASLKKNYILQHDEWKEDIMPEILDGHNVADFIDPDILQRLAELEREEGIREAGVEEADMEMDIEKLSDEQLKQLSEIRKKKAILIKNHRLKKTVAQNRSTVPRKFDKDKKYTTKRMGRELSAMGLDPSSAMDRARSKSRGRKRDRSEDAGNDAMDVDDEQQSNKKQRVRSKSRAMSISRSQSRPPAHEVVPGEGFKDSTQKLSAIKISNKSHKKRDKNARRGEADRVIPTLRPKHLFSGKRGKGKTDRR</sequence>
<proteinExistence type="evidence at transcript level"/>
<gene>
    <name type="ordered locus">At1g50920</name>
    <name type="ORF">F8A12.14</name>
</gene>
<evidence type="ECO:0000250" key="1"/>
<evidence type="ECO:0000255" key="2">
    <source>
        <dbReference type="PROSITE-ProRule" id="PRU01047"/>
    </source>
</evidence>
<evidence type="ECO:0000256" key="3">
    <source>
        <dbReference type="SAM" id="MobiDB-lite"/>
    </source>
</evidence>
<evidence type="ECO:0000305" key="4"/>
<organism>
    <name type="scientific">Arabidopsis thaliana</name>
    <name type="common">Mouse-ear cress</name>
    <dbReference type="NCBI Taxonomy" id="3702"/>
    <lineage>
        <taxon>Eukaryota</taxon>
        <taxon>Viridiplantae</taxon>
        <taxon>Streptophyta</taxon>
        <taxon>Embryophyta</taxon>
        <taxon>Tracheophyta</taxon>
        <taxon>Spermatophyta</taxon>
        <taxon>Magnoliopsida</taxon>
        <taxon>eudicotyledons</taxon>
        <taxon>Gunneridae</taxon>
        <taxon>Pentapetalae</taxon>
        <taxon>rosids</taxon>
        <taxon>malvids</taxon>
        <taxon>Brassicales</taxon>
        <taxon>Brassicaceae</taxon>
        <taxon>Camelineae</taxon>
        <taxon>Arabidopsis</taxon>
    </lineage>
</organism>
<comment type="function">
    <text evidence="1">Involved in the biogenesis of the 60S ribosomal subunit.</text>
</comment>
<comment type="subcellular location">
    <subcellularLocation>
        <location evidence="1">Nucleus</location>
        <location evidence="1">Nucleolus</location>
    </subcellularLocation>
</comment>
<comment type="similarity">
    <text evidence="2">Belongs to the TRAFAC class OBG-HflX-like GTPase superfamily. OBG GTPase family. NOG subfamily.</text>
</comment>
<comment type="sequence caution" evidence="4">
    <conflict type="frameshift">
        <sequence resource="EMBL" id="AY096652"/>
    </conflict>
</comment>
<name>NOG1_ARATH</name>
<dbReference type="EMBL" id="AC079284">
    <property type="protein sequence ID" value="AAG50935.1"/>
    <property type="molecule type" value="Genomic_DNA"/>
</dbReference>
<dbReference type="EMBL" id="CP002684">
    <property type="protein sequence ID" value="AEE32601.1"/>
    <property type="molecule type" value="Genomic_DNA"/>
</dbReference>
<dbReference type="EMBL" id="AY096652">
    <property type="status" value="NOT_ANNOTATED_CDS"/>
    <property type="molecule type" value="mRNA"/>
</dbReference>
<dbReference type="PIR" id="C96546">
    <property type="entry name" value="C96546"/>
</dbReference>
<dbReference type="RefSeq" id="NP_175505.1">
    <property type="nucleotide sequence ID" value="NM_103972.3"/>
</dbReference>
<dbReference type="SMR" id="Q9C6I8"/>
<dbReference type="FunCoup" id="Q9C6I8">
    <property type="interactions" value="4317"/>
</dbReference>
<dbReference type="IntAct" id="Q9C6I8">
    <property type="interactions" value="1"/>
</dbReference>
<dbReference type="STRING" id="3702.Q9C6I8"/>
<dbReference type="iPTMnet" id="Q9C6I8"/>
<dbReference type="PaxDb" id="3702-AT1G50920.1"/>
<dbReference type="ProteomicsDB" id="248934"/>
<dbReference type="EnsemblPlants" id="AT1G50920.1">
    <property type="protein sequence ID" value="AT1G50920.1"/>
    <property type="gene ID" value="AT1G50920"/>
</dbReference>
<dbReference type="GeneID" id="841514"/>
<dbReference type="Gramene" id="AT1G50920.1">
    <property type="protein sequence ID" value="AT1G50920.1"/>
    <property type="gene ID" value="AT1G50920"/>
</dbReference>
<dbReference type="KEGG" id="ath:AT1G50920"/>
<dbReference type="Araport" id="AT1G50920"/>
<dbReference type="TAIR" id="AT1G50920">
    <property type="gene designation" value="NOG1-1"/>
</dbReference>
<dbReference type="eggNOG" id="KOG1490">
    <property type="taxonomic scope" value="Eukaryota"/>
</dbReference>
<dbReference type="HOGENOM" id="CLU_011784_4_1_1"/>
<dbReference type="InParanoid" id="Q9C6I8"/>
<dbReference type="OMA" id="EWKNDVM"/>
<dbReference type="PhylomeDB" id="Q9C6I8"/>
<dbReference type="CD-CODE" id="4299E36E">
    <property type="entry name" value="Nucleolus"/>
</dbReference>
<dbReference type="PRO" id="PR:Q9C6I8"/>
<dbReference type="Proteomes" id="UP000006548">
    <property type="component" value="Chromosome 1"/>
</dbReference>
<dbReference type="ExpressionAtlas" id="Q9C6I8">
    <property type="expression patterns" value="baseline and differential"/>
</dbReference>
<dbReference type="GO" id="GO:0005730">
    <property type="term" value="C:nucleolus"/>
    <property type="evidence" value="ECO:0007669"/>
    <property type="project" value="UniProtKB-SubCell"/>
</dbReference>
<dbReference type="GO" id="GO:0005525">
    <property type="term" value="F:GTP binding"/>
    <property type="evidence" value="ECO:0007669"/>
    <property type="project" value="UniProtKB-KW"/>
</dbReference>
<dbReference type="GO" id="GO:0003729">
    <property type="term" value="F:mRNA binding"/>
    <property type="evidence" value="ECO:0000314"/>
    <property type="project" value="TAIR"/>
</dbReference>
<dbReference type="GO" id="GO:0042254">
    <property type="term" value="P:ribosome biogenesis"/>
    <property type="evidence" value="ECO:0007669"/>
    <property type="project" value="UniProtKB-KW"/>
</dbReference>
<dbReference type="CDD" id="cd01897">
    <property type="entry name" value="NOG"/>
    <property type="match status" value="1"/>
</dbReference>
<dbReference type="FunFam" id="1.20.120.1190:FF:000001">
    <property type="entry name" value="Nucleolar GTP-binding protein 1"/>
    <property type="match status" value="1"/>
</dbReference>
<dbReference type="FunFam" id="3.40.50.300:FF:000496">
    <property type="entry name" value="Nucleolar GTP-binding protein 1"/>
    <property type="match status" value="1"/>
</dbReference>
<dbReference type="Gene3D" id="1.20.120.1190">
    <property type="match status" value="1"/>
</dbReference>
<dbReference type="Gene3D" id="3.40.50.300">
    <property type="entry name" value="P-loop containing nucleotide triphosphate hydrolases"/>
    <property type="match status" value="1"/>
</dbReference>
<dbReference type="InterPro" id="IPR031167">
    <property type="entry name" value="G_OBG"/>
</dbReference>
<dbReference type="InterPro" id="IPR006073">
    <property type="entry name" value="GTP-bd"/>
</dbReference>
<dbReference type="InterPro" id="IPR024926">
    <property type="entry name" value="NOG1"/>
</dbReference>
<dbReference type="InterPro" id="IPR041623">
    <property type="entry name" value="NOG1_N"/>
</dbReference>
<dbReference type="InterPro" id="IPR010674">
    <property type="entry name" value="NOG1_Rossman_fold_dom"/>
</dbReference>
<dbReference type="InterPro" id="IPR012973">
    <property type="entry name" value="NOG_C"/>
</dbReference>
<dbReference type="InterPro" id="IPR027417">
    <property type="entry name" value="P-loop_NTPase"/>
</dbReference>
<dbReference type="PANTHER" id="PTHR45759">
    <property type="entry name" value="NUCLEOLAR GTP-BINDING PROTEIN 1"/>
    <property type="match status" value="1"/>
</dbReference>
<dbReference type="Pfam" id="PF06858">
    <property type="entry name" value="NOG1"/>
    <property type="match status" value="1"/>
</dbReference>
<dbReference type="Pfam" id="PF17835">
    <property type="entry name" value="NOG1_N"/>
    <property type="match status" value="1"/>
</dbReference>
<dbReference type="Pfam" id="PF08155">
    <property type="entry name" value="NOGCT"/>
    <property type="match status" value="1"/>
</dbReference>
<dbReference type="PIRSF" id="PIRSF038919">
    <property type="entry name" value="NOG1"/>
    <property type="match status" value="1"/>
</dbReference>
<dbReference type="PRINTS" id="PR00326">
    <property type="entry name" value="GTP1OBG"/>
</dbReference>
<dbReference type="SUPFAM" id="SSF52540">
    <property type="entry name" value="P-loop containing nucleoside triphosphate hydrolases"/>
    <property type="match status" value="1"/>
</dbReference>
<dbReference type="PROSITE" id="PS51710">
    <property type="entry name" value="G_OBG"/>
    <property type="match status" value="1"/>
</dbReference>